<accession>Q9JUE0</accession>
<accession>A1IRY6</accession>
<feature type="chain" id="PRO_0000103483" description="Dihydroxy-acid dehydratase">
    <location>
        <begin position="1"/>
        <end position="619"/>
    </location>
</feature>
<feature type="active site" description="Proton acceptor" evidence="1">
    <location>
        <position position="520"/>
    </location>
</feature>
<feature type="binding site" evidence="1">
    <location>
        <position position="81"/>
    </location>
    <ligand>
        <name>Mg(2+)</name>
        <dbReference type="ChEBI" id="CHEBI:18420"/>
    </ligand>
</feature>
<feature type="binding site" evidence="1">
    <location>
        <position position="122"/>
    </location>
    <ligand>
        <name>[2Fe-2S] cluster</name>
        <dbReference type="ChEBI" id="CHEBI:190135"/>
    </ligand>
</feature>
<feature type="binding site" evidence="1">
    <location>
        <position position="123"/>
    </location>
    <ligand>
        <name>Mg(2+)</name>
        <dbReference type="ChEBI" id="CHEBI:18420"/>
    </ligand>
</feature>
<feature type="binding site" description="via carbamate group" evidence="1">
    <location>
        <position position="124"/>
    </location>
    <ligand>
        <name>Mg(2+)</name>
        <dbReference type="ChEBI" id="CHEBI:18420"/>
    </ligand>
</feature>
<feature type="binding site" evidence="1">
    <location>
        <position position="198"/>
    </location>
    <ligand>
        <name>[2Fe-2S] cluster</name>
        <dbReference type="ChEBI" id="CHEBI:190135"/>
    </ligand>
</feature>
<feature type="binding site" evidence="1">
    <location>
        <position position="494"/>
    </location>
    <ligand>
        <name>Mg(2+)</name>
        <dbReference type="ChEBI" id="CHEBI:18420"/>
    </ligand>
</feature>
<feature type="modified residue" description="N6-carboxylysine" evidence="1">
    <location>
        <position position="124"/>
    </location>
</feature>
<organism>
    <name type="scientific">Neisseria meningitidis serogroup A / serotype 4A (strain DSM 15465 / Z2491)</name>
    <dbReference type="NCBI Taxonomy" id="122587"/>
    <lineage>
        <taxon>Bacteria</taxon>
        <taxon>Pseudomonadati</taxon>
        <taxon>Pseudomonadota</taxon>
        <taxon>Betaproteobacteria</taxon>
        <taxon>Neisseriales</taxon>
        <taxon>Neisseriaceae</taxon>
        <taxon>Neisseria</taxon>
    </lineage>
</organism>
<proteinExistence type="inferred from homology"/>
<sequence>MPEYRSKTSTHGRNMAGARALWRATGVMETDFGKPIIAVANSFTQFVPGHVHLHNMGQLVAREIEKAGAIAKEFNTIAIDDGIAMGHSGMLYSLPSRDLIADSIEYMVNAHCADALVCISNCDKITPGMLIAAMRLNIPTIFVSGGPMEAGKVIGVANIQPERRLDLIDAMIESADDNISNRQVEEVEQNACPTCGSCSGMFTANSMNCLTEALGLSLPGNGSYLATHVGRKELFLEAGRMIVEITKRYYEQNDETVLPRSIATKKAFENAMTMDIAMGGSTNTILHLLAVANEAGVDFKMADIDRLSRVVPCICKTAPNNHDYYMEDVHRAGGIFAILKELDKAGKLHTDVHTIHAPTLKDAIEKWDVTNPENTHAIERFKAAPGGVRTTQAFSQNRMWKTLDLDREKGCIRDVAHAYSQDGGLAVLFGNIAERGCVVKTAGVDESILKFTGRARVFESQEDAVEGILGNQIVAGDIVIIRYEGPKGGPGMQEMLYPTSYLKSKGLGKACALLTDGRFSGGTSGLSIGHASPEAAEGGAIGLVHEGDTVEIDIPNRSIRLVISDEELAARRAEMEARGSKAWKPENRDRYVSAALRAYGAMATSADKGAVRDVAQIER</sequence>
<gene>
    <name evidence="1" type="primary">ilvD</name>
    <name type="ordered locus">NMA1361</name>
</gene>
<dbReference type="EC" id="4.2.1.9" evidence="1"/>
<dbReference type="EMBL" id="AL157959">
    <property type="protein sequence ID" value="CAM08534.1"/>
    <property type="molecule type" value="Genomic_DNA"/>
</dbReference>
<dbReference type="PIR" id="C81905">
    <property type="entry name" value="C81905"/>
</dbReference>
<dbReference type="RefSeq" id="WP_002236978.1">
    <property type="nucleotide sequence ID" value="NC_003116.1"/>
</dbReference>
<dbReference type="SMR" id="Q9JUE0"/>
<dbReference type="EnsemblBacteria" id="CAM08534">
    <property type="protein sequence ID" value="CAM08534"/>
    <property type="gene ID" value="NMA1361"/>
</dbReference>
<dbReference type="GeneID" id="93386039"/>
<dbReference type="KEGG" id="nma:NMA1361"/>
<dbReference type="HOGENOM" id="CLU_014271_4_2_4"/>
<dbReference type="UniPathway" id="UPA00047">
    <property type="reaction ID" value="UER00057"/>
</dbReference>
<dbReference type="UniPathway" id="UPA00049">
    <property type="reaction ID" value="UER00061"/>
</dbReference>
<dbReference type="Proteomes" id="UP000000626">
    <property type="component" value="Chromosome"/>
</dbReference>
<dbReference type="GO" id="GO:0005829">
    <property type="term" value="C:cytosol"/>
    <property type="evidence" value="ECO:0007669"/>
    <property type="project" value="TreeGrafter"/>
</dbReference>
<dbReference type="GO" id="GO:0051537">
    <property type="term" value="F:2 iron, 2 sulfur cluster binding"/>
    <property type="evidence" value="ECO:0007669"/>
    <property type="project" value="UniProtKB-UniRule"/>
</dbReference>
<dbReference type="GO" id="GO:0004160">
    <property type="term" value="F:dihydroxy-acid dehydratase activity"/>
    <property type="evidence" value="ECO:0007669"/>
    <property type="project" value="UniProtKB-UniRule"/>
</dbReference>
<dbReference type="GO" id="GO:0000287">
    <property type="term" value="F:magnesium ion binding"/>
    <property type="evidence" value="ECO:0007669"/>
    <property type="project" value="UniProtKB-UniRule"/>
</dbReference>
<dbReference type="GO" id="GO:0009097">
    <property type="term" value="P:isoleucine biosynthetic process"/>
    <property type="evidence" value="ECO:0007669"/>
    <property type="project" value="UniProtKB-UniRule"/>
</dbReference>
<dbReference type="GO" id="GO:0009099">
    <property type="term" value="P:L-valine biosynthetic process"/>
    <property type="evidence" value="ECO:0007669"/>
    <property type="project" value="UniProtKB-UniRule"/>
</dbReference>
<dbReference type="FunFam" id="3.50.30.80:FF:000001">
    <property type="entry name" value="Dihydroxy-acid dehydratase"/>
    <property type="match status" value="1"/>
</dbReference>
<dbReference type="Gene3D" id="3.50.30.80">
    <property type="entry name" value="IlvD/EDD C-terminal domain-like"/>
    <property type="match status" value="1"/>
</dbReference>
<dbReference type="HAMAP" id="MF_00012">
    <property type="entry name" value="IlvD"/>
    <property type="match status" value="1"/>
</dbReference>
<dbReference type="InterPro" id="IPR042096">
    <property type="entry name" value="Dihydro-acid_dehy_C"/>
</dbReference>
<dbReference type="InterPro" id="IPR004404">
    <property type="entry name" value="DihydroxyA_deHydtase"/>
</dbReference>
<dbReference type="InterPro" id="IPR020558">
    <property type="entry name" value="DiOHA_6PGluconate_deHydtase_CS"/>
</dbReference>
<dbReference type="InterPro" id="IPR056740">
    <property type="entry name" value="ILV_EDD_C"/>
</dbReference>
<dbReference type="InterPro" id="IPR000581">
    <property type="entry name" value="ILV_EDD_N"/>
</dbReference>
<dbReference type="InterPro" id="IPR037237">
    <property type="entry name" value="IlvD/EDD_N"/>
</dbReference>
<dbReference type="NCBIfam" id="TIGR00110">
    <property type="entry name" value="ilvD"/>
    <property type="match status" value="1"/>
</dbReference>
<dbReference type="NCBIfam" id="NF009103">
    <property type="entry name" value="PRK12448.1"/>
    <property type="match status" value="1"/>
</dbReference>
<dbReference type="PANTHER" id="PTHR43661">
    <property type="entry name" value="D-XYLONATE DEHYDRATASE"/>
    <property type="match status" value="1"/>
</dbReference>
<dbReference type="PANTHER" id="PTHR43661:SF3">
    <property type="entry name" value="D-XYLONATE DEHYDRATASE YAGF-RELATED"/>
    <property type="match status" value="1"/>
</dbReference>
<dbReference type="Pfam" id="PF24877">
    <property type="entry name" value="ILV_EDD_C"/>
    <property type="match status" value="1"/>
</dbReference>
<dbReference type="Pfam" id="PF00920">
    <property type="entry name" value="ILVD_EDD_N"/>
    <property type="match status" value="1"/>
</dbReference>
<dbReference type="SUPFAM" id="SSF143975">
    <property type="entry name" value="IlvD/EDD N-terminal domain-like"/>
    <property type="match status" value="1"/>
</dbReference>
<dbReference type="SUPFAM" id="SSF52016">
    <property type="entry name" value="LeuD/IlvD-like"/>
    <property type="match status" value="1"/>
</dbReference>
<dbReference type="PROSITE" id="PS00886">
    <property type="entry name" value="ILVD_EDD_1"/>
    <property type="match status" value="1"/>
</dbReference>
<dbReference type="PROSITE" id="PS00887">
    <property type="entry name" value="ILVD_EDD_2"/>
    <property type="match status" value="1"/>
</dbReference>
<reference key="1">
    <citation type="journal article" date="2000" name="Nature">
        <title>Complete DNA sequence of a serogroup A strain of Neisseria meningitidis Z2491.</title>
        <authorList>
            <person name="Parkhill J."/>
            <person name="Achtman M."/>
            <person name="James K.D."/>
            <person name="Bentley S.D."/>
            <person name="Churcher C.M."/>
            <person name="Klee S.R."/>
            <person name="Morelli G."/>
            <person name="Basham D."/>
            <person name="Brown D."/>
            <person name="Chillingworth T."/>
            <person name="Davies R.M."/>
            <person name="Davis P."/>
            <person name="Devlin K."/>
            <person name="Feltwell T."/>
            <person name="Hamlin N."/>
            <person name="Holroyd S."/>
            <person name="Jagels K."/>
            <person name="Leather S."/>
            <person name="Moule S."/>
            <person name="Mungall K.L."/>
            <person name="Quail M.A."/>
            <person name="Rajandream M.A."/>
            <person name="Rutherford K.M."/>
            <person name="Simmonds M."/>
            <person name="Skelton J."/>
            <person name="Whitehead S."/>
            <person name="Spratt B.G."/>
            <person name="Barrell B.G."/>
        </authorList>
    </citation>
    <scope>NUCLEOTIDE SEQUENCE [LARGE SCALE GENOMIC DNA]</scope>
    <source>
        <strain>DSM 15465 / Z2491</strain>
    </source>
</reference>
<comment type="function">
    <text evidence="1">Functions in the biosynthesis of branched-chain amino acids. Catalyzes the dehydration of (2R,3R)-2,3-dihydroxy-3-methylpentanoate (2,3-dihydroxy-3-methylvalerate) into 2-oxo-3-methylpentanoate (2-oxo-3-methylvalerate) and of (2R)-2,3-dihydroxy-3-methylbutanoate (2,3-dihydroxyisovalerate) into 2-oxo-3-methylbutanoate (2-oxoisovalerate), the penultimate precursor to L-isoleucine and L-valine, respectively.</text>
</comment>
<comment type="catalytic activity">
    <reaction evidence="1">
        <text>(2R)-2,3-dihydroxy-3-methylbutanoate = 3-methyl-2-oxobutanoate + H2O</text>
        <dbReference type="Rhea" id="RHEA:24809"/>
        <dbReference type="ChEBI" id="CHEBI:11851"/>
        <dbReference type="ChEBI" id="CHEBI:15377"/>
        <dbReference type="ChEBI" id="CHEBI:49072"/>
        <dbReference type="EC" id="4.2.1.9"/>
    </reaction>
    <physiologicalReaction direction="left-to-right" evidence="1">
        <dbReference type="Rhea" id="RHEA:24810"/>
    </physiologicalReaction>
</comment>
<comment type="catalytic activity">
    <reaction evidence="1">
        <text>(2R,3R)-2,3-dihydroxy-3-methylpentanoate = (S)-3-methyl-2-oxopentanoate + H2O</text>
        <dbReference type="Rhea" id="RHEA:27694"/>
        <dbReference type="ChEBI" id="CHEBI:15377"/>
        <dbReference type="ChEBI" id="CHEBI:35146"/>
        <dbReference type="ChEBI" id="CHEBI:49258"/>
        <dbReference type="EC" id="4.2.1.9"/>
    </reaction>
    <physiologicalReaction direction="left-to-right" evidence="1">
        <dbReference type="Rhea" id="RHEA:27695"/>
    </physiologicalReaction>
</comment>
<comment type="cofactor">
    <cofactor evidence="1">
        <name>[2Fe-2S] cluster</name>
        <dbReference type="ChEBI" id="CHEBI:190135"/>
    </cofactor>
    <text evidence="1">Binds 1 [2Fe-2S] cluster per subunit. This cluster acts as a Lewis acid cofactor.</text>
</comment>
<comment type="cofactor">
    <cofactor evidence="1">
        <name>Mg(2+)</name>
        <dbReference type="ChEBI" id="CHEBI:18420"/>
    </cofactor>
</comment>
<comment type="pathway">
    <text evidence="1">Amino-acid biosynthesis; L-isoleucine biosynthesis; L-isoleucine from 2-oxobutanoate: step 3/4.</text>
</comment>
<comment type="pathway">
    <text evidence="1">Amino-acid biosynthesis; L-valine biosynthesis; L-valine from pyruvate: step 3/4.</text>
</comment>
<comment type="subunit">
    <text evidence="1">Homodimer.</text>
</comment>
<comment type="similarity">
    <text evidence="1">Belongs to the IlvD/Edd family.</text>
</comment>
<name>ILVD_NEIMA</name>
<evidence type="ECO:0000255" key="1">
    <source>
        <dbReference type="HAMAP-Rule" id="MF_00012"/>
    </source>
</evidence>
<keyword id="KW-0001">2Fe-2S</keyword>
<keyword id="KW-0028">Amino-acid biosynthesis</keyword>
<keyword id="KW-0100">Branched-chain amino acid biosynthesis</keyword>
<keyword id="KW-0408">Iron</keyword>
<keyword id="KW-0411">Iron-sulfur</keyword>
<keyword id="KW-0456">Lyase</keyword>
<keyword id="KW-0460">Magnesium</keyword>
<keyword id="KW-0479">Metal-binding</keyword>
<protein>
    <recommendedName>
        <fullName evidence="1">Dihydroxy-acid dehydratase</fullName>
        <shortName evidence="1">DAD</shortName>
        <ecNumber evidence="1">4.2.1.9</ecNumber>
    </recommendedName>
</protein>